<dbReference type="EMBL" id="CM001233">
    <property type="protein sequence ID" value="EHA51635.1"/>
    <property type="molecule type" value="Genomic_DNA"/>
</dbReference>
<dbReference type="RefSeq" id="XP_003711442.1">
    <property type="nucleotide sequence ID" value="XM_003711394.1"/>
</dbReference>
<dbReference type="SMR" id="A4RA36"/>
<dbReference type="FunCoup" id="A4RA36">
    <property type="interactions" value="321"/>
</dbReference>
<dbReference type="STRING" id="242507.A4RA36"/>
<dbReference type="EnsemblFungi" id="MGG_07529T0">
    <property type="protein sequence ID" value="MGG_07529T0"/>
    <property type="gene ID" value="MGG_07529"/>
</dbReference>
<dbReference type="GeneID" id="2683449"/>
<dbReference type="KEGG" id="mgr:MGG_07529"/>
<dbReference type="VEuPathDB" id="FungiDB:MGG_07529"/>
<dbReference type="eggNOG" id="ENOG502RY6R">
    <property type="taxonomic scope" value="Eukaryota"/>
</dbReference>
<dbReference type="HOGENOM" id="CLU_096593_0_0_1"/>
<dbReference type="InParanoid" id="A4RA36"/>
<dbReference type="OMA" id="RESMNTI"/>
<dbReference type="OrthoDB" id="1743802at2759"/>
<dbReference type="Proteomes" id="UP000009058">
    <property type="component" value="Chromosome 3"/>
</dbReference>
<dbReference type="GO" id="GO:0005730">
    <property type="term" value="C:nucleolus"/>
    <property type="evidence" value="ECO:0007669"/>
    <property type="project" value="UniProtKB-SubCell"/>
</dbReference>
<dbReference type="GO" id="GO:0030687">
    <property type="term" value="C:preribosome, large subunit precursor"/>
    <property type="evidence" value="ECO:0007669"/>
    <property type="project" value="TreeGrafter"/>
</dbReference>
<dbReference type="GO" id="GO:0003729">
    <property type="term" value="F:mRNA binding"/>
    <property type="evidence" value="ECO:0007669"/>
    <property type="project" value="InterPro"/>
</dbReference>
<dbReference type="GO" id="GO:0008298">
    <property type="term" value="P:intracellular mRNA localization"/>
    <property type="evidence" value="ECO:0007669"/>
    <property type="project" value="TreeGrafter"/>
</dbReference>
<dbReference type="GO" id="GO:0051028">
    <property type="term" value="P:mRNA transport"/>
    <property type="evidence" value="ECO:0007669"/>
    <property type="project" value="UniProtKB-KW"/>
</dbReference>
<dbReference type="GO" id="GO:0042273">
    <property type="term" value="P:ribosomal large subunit biogenesis"/>
    <property type="evidence" value="ECO:0007669"/>
    <property type="project" value="InterPro"/>
</dbReference>
<dbReference type="InterPro" id="IPR037650">
    <property type="entry name" value="Loc1"/>
</dbReference>
<dbReference type="PANTHER" id="PTHR28028">
    <property type="entry name" value="60S RIBOSOMAL SUBUNIT ASSEMBLY/EXPORT PROTEIN LOC1"/>
    <property type="match status" value="1"/>
</dbReference>
<dbReference type="PANTHER" id="PTHR28028:SF1">
    <property type="entry name" value="60S RIBOSOMAL SUBUNIT ASSEMBLY_EXPORT PROTEIN LOC1"/>
    <property type="match status" value="1"/>
</dbReference>
<name>LOC1_PYRO7</name>
<comment type="function">
    <text evidence="1">Required for efficient assembly and nuclear export of the 60S ribosomal subunit.</text>
</comment>
<comment type="subunit">
    <text evidence="1">Component of the 66S pre-ribosomal particle.</text>
</comment>
<comment type="subcellular location">
    <subcellularLocation>
        <location evidence="1">Nucleus</location>
        <location evidence="1">Nucleolus</location>
    </subcellularLocation>
</comment>
<comment type="similarity">
    <text evidence="4">Belongs to the LOC1 family.</text>
</comment>
<feature type="chain" id="PRO_0000308797" description="60S ribosomal subunit assembly/export protein LOC1">
    <location>
        <begin position="1"/>
        <end position="199"/>
    </location>
</feature>
<feature type="region of interest" description="Disordered" evidence="3">
    <location>
        <begin position="1"/>
        <end position="59"/>
    </location>
</feature>
<feature type="region of interest" description="Disordered" evidence="3">
    <location>
        <begin position="141"/>
        <end position="199"/>
    </location>
</feature>
<feature type="coiled-coil region" evidence="2">
    <location>
        <begin position="129"/>
        <end position="175"/>
    </location>
</feature>
<feature type="compositionally biased region" description="Polar residues" evidence="3">
    <location>
        <begin position="20"/>
        <end position="31"/>
    </location>
</feature>
<feature type="compositionally biased region" description="Polar residues" evidence="3">
    <location>
        <begin position="42"/>
        <end position="54"/>
    </location>
</feature>
<feature type="compositionally biased region" description="Basic and acidic residues" evidence="3">
    <location>
        <begin position="141"/>
        <end position="161"/>
    </location>
</feature>
<feature type="compositionally biased region" description="Basic residues" evidence="3">
    <location>
        <begin position="189"/>
        <end position="199"/>
    </location>
</feature>
<accession>A4RA36</accession>
<accession>G4N219</accession>
<organism>
    <name type="scientific">Pyricularia oryzae (strain 70-15 / ATCC MYA-4617 / FGSC 8958)</name>
    <name type="common">Rice blast fungus</name>
    <name type="synonym">Magnaporthe oryzae</name>
    <dbReference type="NCBI Taxonomy" id="242507"/>
    <lineage>
        <taxon>Eukaryota</taxon>
        <taxon>Fungi</taxon>
        <taxon>Dikarya</taxon>
        <taxon>Ascomycota</taxon>
        <taxon>Pezizomycotina</taxon>
        <taxon>Sordariomycetes</taxon>
        <taxon>Sordariomycetidae</taxon>
        <taxon>Magnaporthales</taxon>
        <taxon>Pyriculariaceae</taxon>
        <taxon>Pyricularia</taxon>
    </lineage>
</organism>
<proteinExistence type="inferred from homology"/>
<gene>
    <name type="primary">LOC1</name>
    <name type="ORF">MGG_07529</name>
</gene>
<keyword id="KW-0175">Coiled coil</keyword>
<keyword id="KW-0509">mRNA transport</keyword>
<keyword id="KW-0539">Nucleus</keyword>
<keyword id="KW-1185">Reference proteome</keyword>
<keyword id="KW-0690">Ribosome biogenesis</keyword>
<keyword id="KW-0813">Transport</keyword>
<reference key="1">
    <citation type="journal article" date="2005" name="Nature">
        <title>The genome sequence of the rice blast fungus Magnaporthe grisea.</title>
        <authorList>
            <person name="Dean R.A."/>
            <person name="Talbot N.J."/>
            <person name="Ebbole D.J."/>
            <person name="Farman M.L."/>
            <person name="Mitchell T.K."/>
            <person name="Orbach M.J."/>
            <person name="Thon M.R."/>
            <person name="Kulkarni R."/>
            <person name="Xu J.-R."/>
            <person name="Pan H."/>
            <person name="Read N.D."/>
            <person name="Lee Y.-H."/>
            <person name="Carbone I."/>
            <person name="Brown D."/>
            <person name="Oh Y.Y."/>
            <person name="Donofrio N."/>
            <person name="Jeong J.S."/>
            <person name="Soanes D.M."/>
            <person name="Djonovic S."/>
            <person name="Kolomiets E."/>
            <person name="Rehmeyer C."/>
            <person name="Li W."/>
            <person name="Harding M."/>
            <person name="Kim S."/>
            <person name="Lebrun M.-H."/>
            <person name="Bohnert H."/>
            <person name="Coughlan S."/>
            <person name="Butler J."/>
            <person name="Calvo S.E."/>
            <person name="Ma L.-J."/>
            <person name="Nicol R."/>
            <person name="Purcell S."/>
            <person name="Nusbaum C."/>
            <person name="Galagan J.E."/>
            <person name="Birren B.W."/>
        </authorList>
    </citation>
    <scope>NUCLEOTIDE SEQUENCE [LARGE SCALE GENOMIC DNA]</scope>
    <source>
        <strain>70-15 / ATCC MYA-4617 / FGSC 8958</strain>
    </source>
</reference>
<protein>
    <recommendedName>
        <fullName>60S ribosomal subunit assembly/export protein LOC1</fullName>
    </recommendedName>
</protein>
<sequence length="199" mass="21911">MGIARTKTIKNKHSAKLANLRNNKSSSSQADGGNFVRAKKSGTGSNKPPLTSQAKGRPSIADLLKKKKKRVYTEKELGVPKLNMITPVGVEKPKGKKKGKVFVDDPESINTILAIVQAEKEGQIESKIMKARQMEEIREARRVEAEKKEAERQAKLEDTKNSLRKKRSRSNKTEDDGVSELAATGSKATKAKKKKVAFA</sequence>
<evidence type="ECO:0000250" key="1"/>
<evidence type="ECO:0000255" key="2"/>
<evidence type="ECO:0000256" key="3">
    <source>
        <dbReference type="SAM" id="MobiDB-lite"/>
    </source>
</evidence>
<evidence type="ECO:0000305" key="4"/>